<gene>
    <name evidence="11" type="primary">Lb1</name>
</gene>
<name>LGB1_LUPLU</name>
<protein>
    <recommendedName>
        <fullName evidence="11">Leghemoglobin-1</fullName>
        <shortName evidence="11">LlLb1</shortName>
    </recommendedName>
    <alternativeName>
        <fullName evidence="11">Leghemoglobin I</fullName>
        <shortName evidence="10">LulbI</shortName>
    </alternativeName>
</protein>
<sequence length="154" mass="16753">MGVLTDVQVALVKSSFEEFNANIPKNTHRFFTLVLEIAPGAKDLFSFLKGSSEVPQNNPDLQAHAGKVFKLTYEAAIQLQVNGAVASDATLKSLGSVHVSKGVVDAHFPVVKEAILKTIKEVVGDKWSEELNTAWTIAYDELAIIIKKEMKDAA</sequence>
<organism>
    <name type="scientific">Lupinus luteus</name>
    <name type="common">European yellow lupine</name>
    <dbReference type="NCBI Taxonomy" id="3873"/>
    <lineage>
        <taxon>Eukaryota</taxon>
        <taxon>Viridiplantae</taxon>
        <taxon>Streptophyta</taxon>
        <taxon>Embryophyta</taxon>
        <taxon>Tracheophyta</taxon>
        <taxon>Spermatophyta</taxon>
        <taxon>Magnoliopsida</taxon>
        <taxon>eudicotyledons</taxon>
        <taxon>Gunneridae</taxon>
        <taxon>Pentapetalae</taxon>
        <taxon>rosids</taxon>
        <taxon>fabids</taxon>
        <taxon>Fabales</taxon>
        <taxon>Fabaceae</taxon>
        <taxon>Papilionoideae</taxon>
        <taxon>50 kb inversion clade</taxon>
        <taxon>genistoids sensu lato</taxon>
        <taxon>core genistoids</taxon>
        <taxon>Genisteae</taxon>
        <taxon>Lupinus</taxon>
    </lineage>
</organism>
<comment type="function">
    <text evidence="2 5">Leghemoglobin that reversibly binds oxygen O(2) through a pentacoordinated heme iron (By similarity). In root nodules, facilitates the diffusion of oxygen to the bacteroids while preventing the bacterial nitrogenase from being inactivated by buffering dioxygen, nitric oxide and carbon monoxide, and promoting the formation of reactive oxygen species (ROS, e.g. H(2)O(2)) (By similarity). This role is essential for symbiotic nitrogen fixation (SNF) (By similarity).</text>
</comment>
<comment type="subunit">
    <text evidence="3">Monomer.</text>
</comment>
<comment type="subcellular location">
    <subcellularLocation>
        <location evidence="3">Cytoplasm</location>
        <location evidence="3">Cytosol</location>
    </subcellularLocation>
    <subcellularLocation>
        <location evidence="3">Nucleus</location>
    </subcellularLocation>
</comment>
<comment type="tissue specificity">
    <text evidence="7 8">Accumulates in developing root nodules and present in roots, especially in the upper part (PubMed:10778735, PubMed:25817415). Detected in leaves at low levels (PubMed:10778735).</text>
</comment>
<comment type="developmental stage">
    <text evidence="8">Expressed throughout root nodule development.</text>
</comment>
<comment type="PTM">
    <text evidence="1">Nitrated in effective nodules and particularly in hypoxic conditions; this mechanism may play a protective role in the symbiosis by buffering toxic peroxynitrite NO(2)(-). Nitration level decrease during nodule senescence.</text>
</comment>
<comment type="PTM">
    <text evidence="4">Phosphorylation at Ser-46 disrupts the molecular environment of its porphyrin ring oxygen binding pocket, thus leading to a reduced oxygen consumption and to the delivery of oxygen O(2) to symbiosomes.</text>
</comment>
<comment type="similarity">
    <text evidence="12">Belongs to the plant globin family.</text>
</comment>
<reference key="1">
    <citation type="journal article" date="1987" name="Nucleic Acids Res.">
        <title>Nucleotide sequence of lupin leghemoglobin I cDNA.</title>
        <authorList>
            <person name="Konieczny A."/>
        </authorList>
    </citation>
    <scope>NUCLEOTIDE SEQUENCE [MRNA]</scope>
</reference>
<reference key="2">
    <citation type="online journal article" date="1998" name="Plant Gene Register">
        <title>Yellow lupine gene coding for leghemoglobin I.</title>
        <authorList>
            <person name="Strozycki P.M."/>
            <person name="Karlowski W.M."/>
            <person name="Legocki A.B."/>
        </authorList>
        <locator>PGR98-017</locator>
    </citation>
    <scope>NUCLEOTIDE SEQUENCE [GENOMIC DNA / MRNA]</scope>
    <source>
        <strain>cv. Ventus</strain>
        <tissue>Root nodule</tissue>
    </source>
</reference>
<reference key="3">
    <citation type="journal article" date="1976" name="Bioorg. Khim.">
        <title>The complete amino acid sequence of the leghemoglobin I from yellow lupin root nodules.</title>
        <authorList>
            <person name="Egorov T.A."/>
            <person name="Feigina M.Y."/>
            <person name="Kazakov V.K."/>
            <person name="Shakhparonov M.I."/>
            <person name="Mimaleva S.I."/>
            <person name="Ovchinnikov Y.A."/>
        </authorList>
    </citation>
    <scope>PROTEIN SEQUENCE OF 2-154</scope>
    <source>
        <tissue>Root nodule</tissue>
    </source>
</reference>
<reference key="4">
    <citation type="journal article" date="2000" name="Mol. Gen. Genet.">
        <title>Lupine leghemoglobin I: expression in transgenic Lotus and tobacco tissues.</title>
        <authorList>
            <person name="Strozycki P.M."/>
            <person name="Karlowski W.M."/>
            <person name="Dessaux Y."/>
            <person name="Petit A."/>
            <person name="Legocki A.B."/>
        </authorList>
    </citation>
    <scope>TISSUE SPECIFICITY</scope>
    <source>
        <strain>cv. Ventus</strain>
    </source>
</reference>
<reference key="5">
    <citation type="journal article" date="2015" name="J. Plant Physiol.">
        <title>Molecular cloning of the BLADE-ON-PETIOLE gene and expression analyses during nodule development in Lupinus luteus.</title>
        <authorList>
            <person name="Frankowski K."/>
            <person name="Wilmowicz E."/>
            <person name="Kucko A."/>
            <person name="Zienkiewicz A."/>
            <person name="Zienkiewicz K."/>
            <person name="Kopcewicz J."/>
        </authorList>
    </citation>
    <scope>TISSUE SPECIFICITY</scope>
    <scope>DEVELOPMENTAL STAGE</scope>
    <source>
        <strain>cv. Taper</strain>
    </source>
</reference>
<evidence type="ECO:0000250" key="1">
    <source>
        <dbReference type="UniProtKB" id="P02234"/>
    </source>
</evidence>
<evidence type="ECO:0000250" key="2">
    <source>
        <dbReference type="UniProtKB" id="P02237"/>
    </source>
</evidence>
<evidence type="ECO:0000250" key="3">
    <source>
        <dbReference type="UniProtKB" id="P02240"/>
    </source>
</evidence>
<evidence type="ECO:0000250" key="4">
    <source>
        <dbReference type="UniProtKB" id="Q3C1F7"/>
    </source>
</evidence>
<evidence type="ECO:0000250" key="5">
    <source>
        <dbReference type="UniProtKB" id="Q43296"/>
    </source>
</evidence>
<evidence type="ECO:0000255" key="6">
    <source>
        <dbReference type="PROSITE-ProRule" id="PRU00238"/>
    </source>
</evidence>
<evidence type="ECO:0000269" key="7">
    <source>
    </source>
</evidence>
<evidence type="ECO:0000269" key="8">
    <source>
    </source>
</evidence>
<evidence type="ECO:0000269" key="9">
    <source ref="3"/>
</evidence>
<evidence type="ECO:0000303" key="10">
    <source>
    </source>
</evidence>
<evidence type="ECO:0000303" key="11">
    <source>
    </source>
</evidence>
<evidence type="ECO:0000305" key="12"/>
<feature type="initiator methionine" description="Removed" evidence="9">
    <location>
        <position position="1"/>
    </location>
</feature>
<feature type="chain" id="PRO_0000192984" description="Leghemoglobin-1">
    <location>
        <begin position="2"/>
        <end position="154"/>
    </location>
</feature>
<feature type="domain" description="Globin" evidence="6">
    <location>
        <begin position="3"/>
        <end position="151"/>
    </location>
</feature>
<feature type="binding site" evidence="3">
    <location>
        <position position="46"/>
    </location>
    <ligand>
        <name>heme b</name>
        <dbReference type="ChEBI" id="CHEBI:60344"/>
    </ligand>
</feature>
<feature type="binding site" evidence="3">
    <location>
        <position position="64"/>
    </location>
    <ligand>
        <name>O2</name>
        <dbReference type="ChEBI" id="CHEBI:15379"/>
    </ligand>
</feature>
<feature type="binding site" evidence="3">
    <location>
        <position position="67"/>
    </location>
    <ligand>
        <name>heme b</name>
        <dbReference type="ChEBI" id="CHEBI:60344"/>
    </ligand>
</feature>
<feature type="binding site" description="proximal binding residue" evidence="6">
    <location>
        <position position="98"/>
    </location>
    <ligand>
        <name>heme b</name>
        <dbReference type="ChEBI" id="CHEBI:60344"/>
    </ligand>
    <ligandPart>
        <name>Fe</name>
        <dbReference type="ChEBI" id="CHEBI:18248"/>
    </ligandPart>
</feature>
<feature type="binding site" evidence="3">
    <location>
        <position position="101"/>
    </location>
    <ligand>
        <name>heme b</name>
        <dbReference type="ChEBI" id="CHEBI:60344"/>
    </ligand>
</feature>
<feature type="modified residue" description="Phosphoserine" evidence="4">
    <location>
        <position position="46"/>
    </location>
</feature>
<feature type="modified residue" description="Nitrated tyrosine" evidence="1">
    <location>
        <position position="139"/>
    </location>
</feature>
<feature type="sequence conflict" description="In Ref. 3; AA sequence." evidence="12" ref="3">
    <original>Q</original>
    <variation>E</variation>
    <location>
        <position position="80"/>
    </location>
</feature>
<feature type="sequence conflict" description="In Ref. 1; CAA68462." evidence="12" ref="1">
    <original>E</original>
    <variation>G</variation>
    <location>
        <position position="121"/>
    </location>
</feature>
<accession>P02239</accession>
<proteinExistence type="evidence at protein level"/>
<keyword id="KW-0963">Cytoplasm</keyword>
<keyword id="KW-0903">Direct protein sequencing</keyword>
<keyword id="KW-0349">Heme</keyword>
<keyword id="KW-0408">Iron</keyword>
<keyword id="KW-0479">Metal-binding</keyword>
<keyword id="KW-0944">Nitration</keyword>
<keyword id="KW-0535">Nitrogen fixation</keyword>
<keyword id="KW-0536">Nodulation</keyword>
<keyword id="KW-0539">Nucleus</keyword>
<keyword id="KW-0561">Oxygen transport</keyword>
<keyword id="KW-0597">Phosphoprotein</keyword>
<keyword id="KW-0813">Transport</keyword>
<dbReference type="EMBL" id="Y00401">
    <property type="protein sequence ID" value="CAA68462.1"/>
    <property type="molecule type" value="mRNA"/>
</dbReference>
<dbReference type="EMBL" id="X77043">
    <property type="protein sequence ID" value="CAA54332.1"/>
    <property type="molecule type" value="mRNA"/>
</dbReference>
<dbReference type="EMBL" id="U50083">
    <property type="protein sequence ID" value="AAC04853.1"/>
    <property type="molecule type" value="Genomic_DNA"/>
</dbReference>
<dbReference type="PIR" id="A26808">
    <property type="entry name" value="GPYL"/>
</dbReference>
<dbReference type="SMR" id="P02239"/>
<dbReference type="GO" id="GO:0005829">
    <property type="term" value="C:cytosol"/>
    <property type="evidence" value="ECO:0007669"/>
    <property type="project" value="UniProtKB-SubCell"/>
</dbReference>
<dbReference type="GO" id="GO:0005634">
    <property type="term" value="C:nucleus"/>
    <property type="evidence" value="ECO:0007669"/>
    <property type="project" value="UniProtKB-SubCell"/>
</dbReference>
<dbReference type="GO" id="GO:0020037">
    <property type="term" value="F:heme binding"/>
    <property type="evidence" value="ECO:0007669"/>
    <property type="project" value="InterPro"/>
</dbReference>
<dbReference type="GO" id="GO:0046872">
    <property type="term" value="F:metal ion binding"/>
    <property type="evidence" value="ECO:0007669"/>
    <property type="project" value="UniProtKB-KW"/>
</dbReference>
<dbReference type="GO" id="GO:0019825">
    <property type="term" value="F:oxygen binding"/>
    <property type="evidence" value="ECO:0007669"/>
    <property type="project" value="InterPro"/>
</dbReference>
<dbReference type="GO" id="GO:0005344">
    <property type="term" value="F:oxygen carrier activity"/>
    <property type="evidence" value="ECO:0007669"/>
    <property type="project" value="UniProtKB-KW"/>
</dbReference>
<dbReference type="GO" id="GO:0009877">
    <property type="term" value="P:nodulation"/>
    <property type="evidence" value="ECO:0007669"/>
    <property type="project" value="UniProtKB-KW"/>
</dbReference>
<dbReference type="CDD" id="cd08923">
    <property type="entry name" value="class1-2_nsHbs_Lbs"/>
    <property type="match status" value="1"/>
</dbReference>
<dbReference type="Gene3D" id="1.10.490.10">
    <property type="entry name" value="Globins"/>
    <property type="match status" value="1"/>
</dbReference>
<dbReference type="InterPro" id="IPR000971">
    <property type="entry name" value="Globin"/>
</dbReference>
<dbReference type="InterPro" id="IPR009050">
    <property type="entry name" value="Globin-like_sf"/>
</dbReference>
<dbReference type="InterPro" id="IPR012292">
    <property type="entry name" value="Globin/Proto"/>
</dbReference>
<dbReference type="InterPro" id="IPR001032">
    <property type="entry name" value="Leghaemoglobin-like"/>
</dbReference>
<dbReference type="InterPro" id="IPR019824">
    <property type="entry name" value="Leghaemoglobin_Fe_BS"/>
</dbReference>
<dbReference type="PANTHER" id="PTHR22924">
    <property type="entry name" value="LEGHEMOGLOBIN-RELATED"/>
    <property type="match status" value="1"/>
</dbReference>
<dbReference type="PANTHER" id="PTHR22924:SF92">
    <property type="entry name" value="NON-SYMBIOTIC HEMOGLOBIN 2"/>
    <property type="match status" value="1"/>
</dbReference>
<dbReference type="Pfam" id="PF00042">
    <property type="entry name" value="Globin"/>
    <property type="match status" value="1"/>
</dbReference>
<dbReference type="PRINTS" id="PR00188">
    <property type="entry name" value="PLANTGLOBIN"/>
</dbReference>
<dbReference type="SUPFAM" id="SSF46458">
    <property type="entry name" value="Globin-like"/>
    <property type="match status" value="1"/>
</dbReference>
<dbReference type="PROSITE" id="PS01033">
    <property type="entry name" value="GLOBIN"/>
    <property type="match status" value="1"/>
</dbReference>
<dbReference type="PROSITE" id="PS00208">
    <property type="entry name" value="PLANT_GLOBIN"/>
    <property type="match status" value="1"/>
</dbReference>